<proteinExistence type="inferred from homology"/>
<feature type="chain" id="PRO_1000191557" description="Nucleoid-associated protein YejK">
    <location>
        <begin position="1"/>
        <end position="335"/>
    </location>
</feature>
<dbReference type="EMBL" id="FM180568">
    <property type="protein sequence ID" value="CAS09881.1"/>
    <property type="molecule type" value="Genomic_DNA"/>
</dbReference>
<dbReference type="RefSeq" id="WP_000050789.1">
    <property type="nucleotide sequence ID" value="NC_011601.1"/>
</dbReference>
<dbReference type="SMR" id="B7UFK3"/>
<dbReference type="GeneID" id="75206440"/>
<dbReference type="KEGG" id="ecg:E2348C_2333"/>
<dbReference type="HOGENOM" id="CLU_063050_0_1_6"/>
<dbReference type="Proteomes" id="UP000008205">
    <property type="component" value="Chromosome"/>
</dbReference>
<dbReference type="GO" id="GO:0043590">
    <property type="term" value="C:bacterial nucleoid"/>
    <property type="evidence" value="ECO:0007669"/>
    <property type="project" value="TreeGrafter"/>
</dbReference>
<dbReference type="GO" id="GO:0005737">
    <property type="term" value="C:cytoplasm"/>
    <property type="evidence" value="ECO:0007669"/>
    <property type="project" value="UniProtKB-UniRule"/>
</dbReference>
<dbReference type="GO" id="GO:0003690">
    <property type="term" value="F:double-stranded DNA binding"/>
    <property type="evidence" value="ECO:0007669"/>
    <property type="project" value="TreeGrafter"/>
</dbReference>
<dbReference type="GO" id="GO:0003727">
    <property type="term" value="F:single-stranded RNA binding"/>
    <property type="evidence" value="ECO:0007669"/>
    <property type="project" value="TreeGrafter"/>
</dbReference>
<dbReference type="HAMAP" id="MF_00730">
    <property type="entry name" value="NdpA"/>
    <property type="match status" value="1"/>
</dbReference>
<dbReference type="InterPro" id="IPR007358">
    <property type="entry name" value="Nucleoid_associated_NdpA"/>
</dbReference>
<dbReference type="NCBIfam" id="NF001557">
    <property type="entry name" value="PRK00378.1"/>
    <property type="match status" value="1"/>
</dbReference>
<dbReference type="PANTHER" id="PTHR38772">
    <property type="match status" value="1"/>
</dbReference>
<dbReference type="PANTHER" id="PTHR38772:SF1">
    <property type="entry name" value="NUCLEOID-ASSOCIATED PROTEIN YEJK"/>
    <property type="match status" value="1"/>
</dbReference>
<dbReference type="Pfam" id="PF04245">
    <property type="entry name" value="NA37"/>
    <property type="match status" value="1"/>
</dbReference>
<accession>B7UFK3</accession>
<name>NDPA_ECO27</name>
<gene>
    <name evidence="1" type="primary">yejK</name>
    <name type="ordered locus">E2348C_2333</name>
</gene>
<sequence length="335" mass="37823">MSLDINQIALHQLIKRDEQNLELVLRDSLLEPTETVVEMVAELHRVYSAKNKAYGLFSEESELAQTLRLQRQGEEDFLAFSRAATGRLRDELAKYPFADGGFVLFCHYRYLAVEYLLVAVLSNLSSMRVNENLDINPTHYLDINHADIVARIDLTEWETNPESTRYLTFLKGRVGRKVADFFMDFLGASEGLNAKAQNRGLLQAVDDFTAEAQLDKAERQNVRQQVYSYCNEQLQAGEEIELESLSKELAGVSEVSFTEFAAEKGYELEESFPADRSTLRQLTKFAGSGGGLTINFDAMLLGERIFWDPATDTLTIKGTPPNLRDQLQRRTSGGN</sequence>
<reference key="1">
    <citation type="journal article" date="2009" name="J. Bacteriol.">
        <title>Complete genome sequence and comparative genome analysis of enteropathogenic Escherichia coli O127:H6 strain E2348/69.</title>
        <authorList>
            <person name="Iguchi A."/>
            <person name="Thomson N.R."/>
            <person name="Ogura Y."/>
            <person name="Saunders D."/>
            <person name="Ooka T."/>
            <person name="Henderson I.R."/>
            <person name="Harris D."/>
            <person name="Asadulghani M."/>
            <person name="Kurokawa K."/>
            <person name="Dean P."/>
            <person name="Kenny B."/>
            <person name="Quail M.A."/>
            <person name="Thurston S."/>
            <person name="Dougan G."/>
            <person name="Hayashi T."/>
            <person name="Parkhill J."/>
            <person name="Frankel G."/>
        </authorList>
    </citation>
    <scope>NUCLEOTIDE SEQUENCE [LARGE SCALE GENOMIC DNA]</scope>
    <source>
        <strain>E2348/69 / EPEC</strain>
    </source>
</reference>
<evidence type="ECO:0000255" key="1">
    <source>
        <dbReference type="HAMAP-Rule" id="MF_00730"/>
    </source>
</evidence>
<protein>
    <recommendedName>
        <fullName evidence="1">Nucleoid-associated protein YejK</fullName>
    </recommendedName>
</protein>
<comment type="subcellular location">
    <subcellularLocation>
        <location evidence="1">Cytoplasm</location>
        <location evidence="1">Nucleoid</location>
    </subcellularLocation>
</comment>
<comment type="similarity">
    <text evidence="1">Belongs to the YejK family.</text>
</comment>
<organism>
    <name type="scientific">Escherichia coli O127:H6 (strain E2348/69 / EPEC)</name>
    <dbReference type="NCBI Taxonomy" id="574521"/>
    <lineage>
        <taxon>Bacteria</taxon>
        <taxon>Pseudomonadati</taxon>
        <taxon>Pseudomonadota</taxon>
        <taxon>Gammaproteobacteria</taxon>
        <taxon>Enterobacterales</taxon>
        <taxon>Enterobacteriaceae</taxon>
        <taxon>Escherichia</taxon>
    </lineage>
</organism>
<keyword id="KW-0963">Cytoplasm</keyword>
<keyword id="KW-1185">Reference proteome</keyword>